<reference key="1">
    <citation type="journal article" date="2008" name="J. Bacteriol.">
        <title>The complete genome sequence of Thermococcus onnurineus NA1 reveals a mixed heterotrophic and carboxydotrophic metabolism.</title>
        <authorList>
            <person name="Lee H.S."/>
            <person name="Kang S.G."/>
            <person name="Bae S.S."/>
            <person name="Lim J.K."/>
            <person name="Cho Y."/>
            <person name="Kim Y.J."/>
            <person name="Jeon J.H."/>
            <person name="Cha S.-S."/>
            <person name="Kwon K.K."/>
            <person name="Kim H.-T."/>
            <person name="Park C.-J."/>
            <person name="Lee H.-W."/>
            <person name="Kim S.I."/>
            <person name="Chun J."/>
            <person name="Colwell R.R."/>
            <person name="Kim S.-J."/>
            <person name="Lee J.-H."/>
        </authorList>
    </citation>
    <scope>NUCLEOTIDE SEQUENCE [LARGE SCALE GENOMIC DNA]</scope>
    <source>
        <strain>NA1</strain>
    </source>
</reference>
<protein>
    <recommendedName>
        <fullName evidence="1">Protein translation factor SUI1 homolog</fullName>
    </recommendedName>
</protein>
<gene>
    <name type="ordered locus">TON_0074</name>
</gene>
<feature type="chain" id="PRO_1000130117" description="Protein translation factor SUI1 homolog">
    <location>
        <begin position="1"/>
        <end position="98"/>
    </location>
</feature>
<proteinExistence type="inferred from homology"/>
<accession>B6YSM1</accession>
<organism>
    <name type="scientific">Thermococcus onnurineus (strain NA1)</name>
    <dbReference type="NCBI Taxonomy" id="523850"/>
    <lineage>
        <taxon>Archaea</taxon>
        <taxon>Methanobacteriati</taxon>
        <taxon>Methanobacteriota</taxon>
        <taxon>Thermococci</taxon>
        <taxon>Thermococcales</taxon>
        <taxon>Thermococcaceae</taxon>
        <taxon>Thermococcus</taxon>
    </lineage>
</organism>
<evidence type="ECO:0000255" key="1">
    <source>
        <dbReference type="HAMAP-Rule" id="MF_00604"/>
    </source>
</evidence>
<dbReference type="EMBL" id="CP000855">
    <property type="protein sequence ID" value="ACJ15558.1"/>
    <property type="molecule type" value="Genomic_DNA"/>
</dbReference>
<dbReference type="SMR" id="B6YSM1"/>
<dbReference type="STRING" id="523850.TON_0074"/>
<dbReference type="KEGG" id="ton:TON_0074"/>
<dbReference type="PATRIC" id="fig|523850.10.peg.74"/>
<dbReference type="eggNOG" id="arCOG04223">
    <property type="taxonomic scope" value="Archaea"/>
</dbReference>
<dbReference type="HOGENOM" id="CLU_082805_6_1_2"/>
<dbReference type="OrthoDB" id="11182at2157"/>
<dbReference type="Proteomes" id="UP000002727">
    <property type="component" value="Chromosome"/>
</dbReference>
<dbReference type="GO" id="GO:0003729">
    <property type="term" value="F:mRNA binding"/>
    <property type="evidence" value="ECO:0007669"/>
    <property type="project" value="TreeGrafter"/>
</dbReference>
<dbReference type="GO" id="GO:0003743">
    <property type="term" value="F:translation initiation factor activity"/>
    <property type="evidence" value="ECO:0007669"/>
    <property type="project" value="InterPro"/>
</dbReference>
<dbReference type="GO" id="GO:0001731">
    <property type="term" value="P:formation of translation preinitiation complex"/>
    <property type="evidence" value="ECO:0007669"/>
    <property type="project" value="TreeGrafter"/>
</dbReference>
<dbReference type="GO" id="GO:0006417">
    <property type="term" value="P:regulation of translation"/>
    <property type="evidence" value="ECO:0007669"/>
    <property type="project" value="UniProtKB-UniRule"/>
</dbReference>
<dbReference type="GO" id="GO:0002188">
    <property type="term" value="P:translation reinitiation"/>
    <property type="evidence" value="ECO:0007669"/>
    <property type="project" value="TreeGrafter"/>
</dbReference>
<dbReference type="CDD" id="cd11567">
    <property type="entry name" value="YciH_like"/>
    <property type="match status" value="1"/>
</dbReference>
<dbReference type="FunFam" id="3.30.780.10:FF:000006">
    <property type="entry name" value="Protein translation factor SUI1 homolog"/>
    <property type="match status" value="1"/>
</dbReference>
<dbReference type="Gene3D" id="3.30.780.10">
    <property type="entry name" value="SUI1-like domain"/>
    <property type="match status" value="1"/>
</dbReference>
<dbReference type="HAMAP" id="MF_00604">
    <property type="entry name" value="SUI1"/>
    <property type="match status" value="1"/>
</dbReference>
<dbReference type="InterPro" id="IPR050318">
    <property type="entry name" value="DENR/SUI1_TIF"/>
</dbReference>
<dbReference type="InterPro" id="IPR001950">
    <property type="entry name" value="SUI1"/>
</dbReference>
<dbReference type="InterPro" id="IPR022851">
    <property type="entry name" value="SUI1_arc"/>
</dbReference>
<dbReference type="InterPro" id="IPR005872">
    <property type="entry name" value="SUI1_arc_bac"/>
</dbReference>
<dbReference type="InterPro" id="IPR036877">
    <property type="entry name" value="SUI1_dom_sf"/>
</dbReference>
<dbReference type="NCBIfam" id="NF002096">
    <property type="entry name" value="PRK00939.1"/>
    <property type="match status" value="1"/>
</dbReference>
<dbReference type="NCBIfam" id="TIGR01158">
    <property type="entry name" value="SUI1_rel"/>
    <property type="match status" value="1"/>
</dbReference>
<dbReference type="PANTHER" id="PTHR12789:SF0">
    <property type="entry name" value="DENSITY-REGULATED PROTEIN"/>
    <property type="match status" value="1"/>
</dbReference>
<dbReference type="PANTHER" id="PTHR12789">
    <property type="entry name" value="DENSITY-REGULATED PROTEIN HOMOLOG"/>
    <property type="match status" value="1"/>
</dbReference>
<dbReference type="Pfam" id="PF01253">
    <property type="entry name" value="SUI1"/>
    <property type="match status" value="1"/>
</dbReference>
<dbReference type="PIRSF" id="PIRSF037511">
    <property type="entry name" value="Transl_init_SUI1_pro"/>
    <property type="match status" value="1"/>
</dbReference>
<dbReference type="SUPFAM" id="SSF55159">
    <property type="entry name" value="eIF1-like"/>
    <property type="match status" value="1"/>
</dbReference>
<dbReference type="PROSITE" id="PS50296">
    <property type="entry name" value="SUI1"/>
    <property type="match status" value="1"/>
</dbReference>
<name>SUI1_THEON</name>
<sequence length="98" mass="11354">MPRIVNPLDEMLFKEVLKEQQRIRVYIEKARYGKLKTIIEGIDEKEFDLEDIAKKLKAKLACGGTVKKGRIELQGDHREKVKKLLADLGFSEDLIEIE</sequence>
<comment type="similarity">
    <text evidence="1">Belongs to the SUI1 family.</text>
</comment>
<keyword id="KW-0648">Protein biosynthesis</keyword>
<keyword id="KW-0810">Translation regulation</keyword>